<dbReference type="EMBL" id="AF169676">
    <property type="protein sequence ID" value="AAF28460.1"/>
    <property type="molecule type" value="mRNA"/>
</dbReference>
<dbReference type="EMBL" id="AY358287">
    <property type="protein sequence ID" value="AAQ88654.1"/>
    <property type="molecule type" value="mRNA"/>
</dbReference>
<dbReference type="EMBL" id="AB007865">
    <property type="protein sequence ID" value="BAA23701.2"/>
    <property type="status" value="ALT_INIT"/>
    <property type="molecule type" value="mRNA"/>
</dbReference>
<dbReference type="EMBL" id="BC126249">
    <property type="protein sequence ID" value="AAI26250.1"/>
    <property type="molecule type" value="mRNA"/>
</dbReference>
<dbReference type="EMBL" id="BC130290">
    <property type="protein sequence ID" value="AAI30291.1"/>
    <property type="molecule type" value="mRNA"/>
</dbReference>
<dbReference type="EMBL" id="BC143936">
    <property type="protein sequence ID" value="AAI43937.1"/>
    <property type="molecule type" value="mRNA"/>
</dbReference>
<dbReference type="CCDS" id="CCDS9877.1"/>
<dbReference type="RefSeq" id="NP_001333072.1">
    <property type="nucleotide sequence ID" value="NM_001346143.2"/>
</dbReference>
<dbReference type="RefSeq" id="NP_001333073.1">
    <property type="nucleotide sequence ID" value="NM_001346144.2"/>
</dbReference>
<dbReference type="RefSeq" id="NP_001333074.1">
    <property type="nucleotide sequence ID" value="NM_001346145.2"/>
</dbReference>
<dbReference type="RefSeq" id="NP_001333075.1">
    <property type="nucleotide sequence ID" value="NM_001346146.2"/>
</dbReference>
<dbReference type="RefSeq" id="NP_037363.1">
    <property type="nucleotide sequence ID" value="NM_013231.6"/>
</dbReference>
<dbReference type="RefSeq" id="XP_005267547.1">
    <property type="nucleotide sequence ID" value="XM_005267490.3"/>
</dbReference>
<dbReference type="RefSeq" id="XP_011534913.1">
    <property type="nucleotide sequence ID" value="XM_011536611.2"/>
</dbReference>
<dbReference type="RefSeq" id="XP_016876618.1">
    <property type="nucleotide sequence ID" value="XM_017021129.1"/>
</dbReference>
<dbReference type="RefSeq" id="XP_016876619.1">
    <property type="nucleotide sequence ID" value="XM_017021130.1"/>
</dbReference>
<dbReference type="RefSeq" id="XP_016876620.1">
    <property type="nucleotide sequence ID" value="XM_017021131.1"/>
</dbReference>
<dbReference type="RefSeq" id="XP_016876621.1">
    <property type="nucleotide sequence ID" value="XM_017021132.1"/>
</dbReference>
<dbReference type="RefSeq" id="XP_016876622.1">
    <property type="nucleotide sequence ID" value="XM_017021133.1"/>
</dbReference>
<dbReference type="RefSeq" id="XP_016876623.1">
    <property type="nucleotide sequence ID" value="XM_017021134.1"/>
</dbReference>
<dbReference type="RefSeq" id="XP_016876624.1">
    <property type="nucleotide sequence ID" value="XM_017021135.1"/>
</dbReference>
<dbReference type="RefSeq" id="XP_047287132.1">
    <property type="nucleotide sequence ID" value="XM_047431176.1"/>
</dbReference>
<dbReference type="RefSeq" id="XP_047302306.1">
    <property type="nucleotide sequence ID" value="XM_047446350.1"/>
</dbReference>
<dbReference type="RefSeq" id="XP_047302307.1">
    <property type="nucleotide sequence ID" value="XM_047446351.1"/>
</dbReference>
<dbReference type="RefSeq" id="XP_047302308.1">
    <property type="nucleotide sequence ID" value="XM_047446352.1"/>
</dbReference>
<dbReference type="RefSeq" id="XP_059933448.1">
    <property type="nucleotide sequence ID" value="XM_060077465.1"/>
</dbReference>
<dbReference type="RefSeq" id="XP_059933449.1">
    <property type="nucleotide sequence ID" value="XM_060077466.1"/>
</dbReference>
<dbReference type="RefSeq" id="XP_059933450.1">
    <property type="nucleotide sequence ID" value="XM_060077467.1"/>
</dbReference>
<dbReference type="RefSeq" id="XP_059933451.1">
    <property type="nucleotide sequence ID" value="XM_060077468.1"/>
</dbReference>
<dbReference type="RefSeq" id="XP_059933452.1">
    <property type="nucleotide sequence ID" value="XM_060077469.1"/>
</dbReference>
<dbReference type="RefSeq" id="XP_059933453.1">
    <property type="nucleotide sequence ID" value="XM_060077470.1"/>
</dbReference>
<dbReference type="RefSeq" id="XP_059933454.1">
    <property type="nucleotide sequence ID" value="XM_060077471.1"/>
</dbReference>
<dbReference type="RefSeq" id="XP_059933455.1">
    <property type="nucleotide sequence ID" value="XM_060077472.1"/>
</dbReference>
<dbReference type="RefSeq" id="XP_059933456.1">
    <property type="nucleotide sequence ID" value="XM_060077473.1"/>
</dbReference>
<dbReference type="SMR" id="O43155"/>
<dbReference type="BioGRID" id="117268">
    <property type="interactions" value="22"/>
</dbReference>
<dbReference type="FunCoup" id="O43155">
    <property type="interactions" value="56"/>
</dbReference>
<dbReference type="IntAct" id="O43155">
    <property type="interactions" value="4"/>
</dbReference>
<dbReference type="MINT" id="O43155"/>
<dbReference type="STRING" id="9606.ENSP00000332879"/>
<dbReference type="GlyCosmos" id="O43155">
    <property type="glycosylation" value="5 sites, 1 glycan"/>
</dbReference>
<dbReference type="GlyGen" id="O43155">
    <property type="glycosylation" value="8 sites, 2 O-linked glycans (2 sites)"/>
</dbReference>
<dbReference type="iPTMnet" id="O43155"/>
<dbReference type="PhosphoSitePlus" id="O43155"/>
<dbReference type="SwissPalm" id="O43155"/>
<dbReference type="BioMuta" id="FLRT2"/>
<dbReference type="MassIVE" id="O43155"/>
<dbReference type="PaxDb" id="9606-ENSP00000332879"/>
<dbReference type="PeptideAtlas" id="O43155"/>
<dbReference type="ProteomicsDB" id="48775"/>
<dbReference type="Pumba" id="O43155"/>
<dbReference type="Antibodypedia" id="55194">
    <property type="antibodies" value="73 antibodies from 16 providers"/>
</dbReference>
<dbReference type="DNASU" id="23768"/>
<dbReference type="Ensembl" id="ENST00000330753.6">
    <property type="protein sequence ID" value="ENSP00000332879.4"/>
    <property type="gene ID" value="ENSG00000185070.12"/>
</dbReference>
<dbReference type="Ensembl" id="ENST00000554746.1">
    <property type="protein sequence ID" value="ENSP00000451050.1"/>
    <property type="gene ID" value="ENSG00000185070.12"/>
</dbReference>
<dbReference type="Ensembl" id="ENST00000682132.1">
    <property type="protein sequence ID" value="ENSP00000507088.1"/>
    <property type="gene ID" value="ENSG00000185070.12"/>
</dbReference>
<dbReference type="Ensembl" id="ENST00000683129.1">
    <property type="protein sequence ID" value="ENSP00000507815.1"/>
    <property type="gene ID" value="ENSG00000185070.12"/>
</dbReference>
<dbReference type="GeneID" id="23768"/>
<dbReference type="KEGG" id="hsa:23768"/>
<dbReference type="MANE-Select" id="ENST00000330753.6">
    <property type="protein sequence ID" value="ENSP00000332879.4"/>
    <property type="RefSeq nucleotide sequence ID" value="NM_013231.6"/>
    <property type="RefSeq protein sequence ID" value="NP_037363.1"/>
</dbReference>
<dbReference type="UCSC" id="uc001xvr.4">
    <property type="organism name" value="human"/>
</dbReference>
<dbReference type="AGR" id="HGNC:3761"/>
<dbReference type="CTD" id="23768"/>
<dbReference type="DisGeNET" id="23768"/>
<dbReference type="GeneCards" id="FLRT2"/>
<dbReference type="HGNC" id="HGNC:3761">
    <property type="gene designation" value="FLRT2"/>
</dbReference>
<dbReference type="HPA" id="ENSG00000185070">
    <property type="expression patterns" value="Tissue enhanced (ovary)"/>
</dbReference>
<dbReference type="MIM" id="604807">
    <property type="type" value="gene"/>
</dbReference>
<dbReference type="neXtProt" id="NX_O43155"/>
<dbReference type="OpenTargets" id="ENSG00000185070"/>
<dbReference type="PharmGKB" id="PA28178"/>
<dbReference type="VEuPathDB" id="HostDB:ENSG00000185070"/>
<dbReference type="eggNOG" id="ENOG502QSJU">
    <property type="taxonomic scope" value="Eukaryota"/>
</dbReference>
<dbReference type="GeneTree" id="ENSGT00940000158937"/>
<dbReference type="HOGENOM" id="CLU_027624_0_0_1"/>
<dbReference type="InParanoid" id="O43155"/>
<dbReference type="OMA" id="KADFRIQ"/>
<dbReference type="OrthoDB" id="676979at2759"/>
<dbReference type="PAN-GO" id="O43155">
    <property type="GO annotations" value="1 GO annotation based on evolutionary models"/>
</dbReference>
<dbReference type="PhylomeDB" id="O43155"/>
<dbReference type="TreeFam" id="TF315838"/>
<dbReference type="PathwayCommons" id="O43155"/>
<dbReference type="Reactome" id="R-HSA-5654687">
    <property type="pathway name" value="Downstream signaling of activated FGFR1"/>
</dbReference>
<dbReference type="SignaLink" id="O43155"/>
<dbReference type="BioGRID-ORCS" id="23768">
    <property type="hits" value="12 hits in 1150 CRISPR screens"/>
</dbReference>
<dbReference type="ChiTaRS" id="FLRT2">
    <property type="organism name" value="human"/>
</dbReference>
<dbReference type="GeneWiki" id="FLRT2"/>
<dbReference type="GenomeRNAi" id="23768"/>
<dbReference type="Pharos" id="O43155">
    <property type="development level" value="Tbio"/>
</dbReference>
<dbReference type="PRO" id="PR:O43155"/>
<dbReference type="Proteomes" id="UP000005640">
    <property type="component" value="Chromosome 14"/>
</dbReference>
<dbReference type="RNAct" id="O43155">
    <property type="molecule type" value="protein"/>
</dbReference>
<dbReference type="Bgee" id="ENSG00000185070">
    <property type="expression patterns" value="Expressed in germinal epithelium of ovary and 197 other cell types or tissues"/>
</dbReference>
<dbReference type="GO" id="GO:0005911">
    <property type="term" value="C:cell-cell junction"/>
    <property type="evidence" value="ECO:0000250"/>
    <property type="project" value="UniProtKB"/>
</dbReference>
<dbReference type="GO" id="GO:0005789">
    <property type="term" value="C:endoplasmic reticulum membrane"/>
    <property type="evidence" value="ECO:0007669"/>
    <property type="project" value="UniProtKB-SubCell"/>
</dbReference>
<dbReference type="GO" id="GO:0070062">
    <property type="term" value="C:extracellular exosome"/>
    <property type="evidence" value="ECO:0007005"/>
    <property type="project" value="UniProtKB"/>
</dbReference>
<dbReference type="GO" id="GO:0031012">
    <property type="term" value="C:extracellular matrix"/>
    <property type="evidence" value="ECO:0000303"/>
    <property type="project" value="UniProtKB"/>
</dbReference>
<dbReference type="GO" id="GO:0005615">
    <property type="term" value="C:extracellular space"/>
    <property type="evidence" value="ECO:0000318"/>
    <property type="project" value="GO_Central"/>
</dbReference>
<dbReference type="GO" id="GO:0005925">
    <property type="term" value="C:focal adhesion"/>
    <property type="evidence" value="ECO:0007005"/>
    <property type="project" value="UniProtKB"/>
</dbReference>
<dbReference type="GO" id="GO:0098978">
    <property type="term" value="C:glutamatergic synapse"/>
    <property type="evidence" value="ECO:0007669"/>
    <property type="project" value="Ensembl"/>
</dbReference>
<dbReference type="GO" id="GO:0043005">
    <property type="term" value="C:neuron projection"/>
    <property type="evidence" value="ECO:0007669"/>
    <property type="project" value="UniProtKB-KW"/>
</dbReference>
<dbReference type="GO" id="GO:0005886">
    <property type="term" value="C:plasma membrane"/>
    <property type="evidence" value="ECO:0000250"/>
    <property type="project" value="UniProtKB"/>
</dbReference>
<dbReference type="GO" id="GO:0045211">
    <property type="term" value="C:postsynaptic membrane"/>
    <property type="evidence" value="ECO:0007669"/>
    <property type="project" value="Ensembl"/>
</dbReference>
<dbReference type="GO" id="GO:0042734">
    <property type="term" value="C:presynaptic membrane"/>
    <property type="evidence" value="ECO:0007669"/>
    <property type="project" value="Ensembl"/>
</dbReference>
<dbReference type="GO" id="GO:0045499">
    <property type="term" value="F:chemorepellent activity"/>
    <property type="evidence" value="ECO:0007669"/>
    <property type="project" value="Ensembl"/>
</dbReference>
<dbReference type="GO" id="GO:0005104">
    <property type="term" value="F:fibroblast growth factor receptor binding"/>
    <property type="evidence" value="ECO:0007669"/>
    <property type="project" value="Ensembl"/>
</dbReference>
<dbReference type="GO" id="GO:0030674">
    <property type="term" value="F:protein-macromolecule adaptor activity"/>
    <property type="evidence" value="ECO:0000303"/>
    <property type="project" value="UniProtKB"/>
</dbReference>
<dbReference type="GO" id="GO:0007411">
    <property type="term" value="P:axon guidance"/>
    <property type="evidence" value="ECO:0007669"/>
    <property type="project" value="Ensembl"/>
</dbReference>
<dbReference type="GO" id="GO:0071711">
    <property type="term" value="P:basement membrane organization"/>
    <property type="evidence" value="ECO:0000250"/>
    <property type="project" value="UniProtKB"/>
</dbReference>
<dbReference type="GO" id="GO:0061343">
    <property type="term" value="P:cell adhesion involved in heart morphogenesis"/>
    <property type="evidence" value="ECO:0000250"/>
    <property type="project" value="UniProtKB"/>
</dbReference>
<dbReference type="GO" id="GO:0008543">
    <property type="term" value="P:fibroblast growth factor receptor signaling pathway"/>
    <property type="evidence" value="ECO:0000250"/>
    <property type="project" value="UniProtKB"/>
</dbReference>
<dbReference type="GO" id="GO:0003007">
    <property type="term" value="P:heart morphogenesis"/>
    <property type="evidence" value="ECO:0000250"/>
    <property type="project" value="UniProtKB"/>
</dbReference>
<dbReference type="GO" id="GO:0051965">
    <property type="term" value="P:positive regulation of synapse assembly"/>
    <property type="evidence" value="ECO:0007669"/>
    <property type="project" value="Ensembl"/>
</dbReference>
<dbReference type="GO" id="GO:2001222">
    <property type="term" value="P:regulation of neuron migration"/>
    <property type="evidence" value="ECO:0007669"/>
    <property type="project" value="Ensembl"/>
</dbReference>
<dbReference type="FunFam" id="3.80.10.10:FF:000043">
    <property type="entry name" value="Leucine-rich repeat transmembrane protein FLRT3"/>
    <property type="match status" value="1"/>
</dbReference>
<dbReference type="Gene3D" id="2.60.40.10">
    <property type="entry name" value="Immunoglobulins"/>
    <property type="match status" value="1"/>
</dbReference>
<dbReference type="Gene3D" id="3.80.10.10">
    <property type="entry name" value="Ribonuclease Inhibitor"/>
    <property type="match status" value="1"/>
</dbReference>
<dbReference type="InterPro" id="IPR000483">
    <property type="entry name" value="Cys-rich_flank_reg_C"/>
</dbReference>
<dbReference type="InterPro" id="IPR003961">
    <property type="entry name" value="FN3_dom"/>
</dbReference>
<dbReference type="InterPro" id="IPR036116">
    <property type="entry name" value="FN3_sf"/>
</dbReference>
<dbReference type="InterPro" id="IPR013783">
    <property type="entry name" value="Ig-like_fold"/>
</dbReference>
<dbReference type="InterPro" id="IPR001611">
    <property type="entry name" value="Leu-rich_rpt"/>
</dbReference>
<dbReference type="InterPro" id="IPR003591">
    <property type="entry name" value="Leu-rich_rpt_typical-subtyp"/>
</dbReference>
<dbReference type="InterPro" id="IPR032675">
    <property type="entry name" value="LRR_dom_sf"/>
</dbReference>
<dbReference type="InterPro" id="IPR000372">
    <property type="entry name" value="LRRNT"/>
</dbReference>
<dbReference type="InterPro" id="IPR050333">
    <property type="entry name" value="SLRP"/>
</dbReference>
<dbReference type="PANTHER" id="PTHR45712">
    <property type="entry name" value="AGAP008170-PA"/>
    <property type="match status" value="1"/>
</dbReference>
<dbReference type="PANTHER" id="PTHR45712:SF16">
    <property type="entry name" value="LEUCINE-RICH REPEAT TRANSMEMBRANE PROTEIN FLRT2"/>
    <property type="match status" value="1"/>
</dbReference>
<dbReference type="Pfam" id="PF13855">
    <property type="entry name" value="LRR_8"/>
    <property type="match status" value="3"/>
</dbReference>
<dbReference type="Pfam" id="PF01463">
    <property type="entry name" value="LRRCT"/>
    <property type="match status" value="1"/>
</dbReference>
<dbReference type="SMART" id="SM00369">
    <property type="entry name" value="LRR_TYP"/>
    <property type="match status" value="7"/>
</dbReference>
<dbReference type="SMART" id="SM00082">
    <property type="entry name" value="LRRCT"/>
    <property type="match status" value="1"/>
</dbReference>
<dbReference type="SMART" id="SM00013">
    <property type="entry name" value="LRRNT"/>
    <property type="match status" value="1"/>
</dbReference>
<dbReference type="SUPFAM" id="SSF49265">
    <property type="entry name" value="Fibronectin type III"/>
    <property type="match status" value="1"/>
</dbReference>
<dbReference type="SUPFAM" id="SSF52058">
    <property type="entry name" value="L domain-like"/>
    <property type="match status" value="1"/>
</dbReference>
<dbReference type="PROSITE" id="PS50853">
    <property type="entry name" value="FN3"/>
    <property type="match status" value="1"/>
</dbReference>
<comment type="function">
    <text evidence="3">Functions in cell-cell adhesion, cell migration and axon guidance. Mediates cell-cell adhesion via its interactions with ADGRL3 and probably also other latrophilins that are expressed at the surface of adjacent cells. May play a role in the migration of cortical neurons during brain development via its interaction with UNC5D. Mediates axon growth cone collapse and plays a repulsive role in neuron guidance via its interaction with UNC5D, and possibly also other UNC-5 family members. Plays a role in fibroblast growth factor-mediated signaling cascades. Required for normal organization of the cardiac basement membrane during embryogenesis, and for normal embryonic epicardium and heart morphogenesis.</text>
</comment>
<comment type="subunit">
    <text evidence="3">Self-associates (via leucine-rich repeats), giving rise to homooligomers. Interacts with FGFR1. Interacts with FGFR2. Interacts (via extracellular domain) with ADGRL1/LPHN1. Interacts (via extracellular domain) with ADGRL3 (via olfactomedin-like domain). Interacts (via extracellular domain) with UNC5D (via the first Ig-like domain). Can also interact (via extracellular domain) with UNC5B, but with much lower affinity. Interacts (via extracellular domain) with FN1.</text>
</comment>
<comment type="subcellular location">
    <subcellularLocation>
        <location evidence="3">Cell membrane</location>
        <topology evidence="3">Single-pass membrane protein</topology>
    </subcellularLocation>
    <subcellularLocation>
        <location evidence="3">Endoplasmic reticulum membrane</location>
    </subcellularLocation>
    <subcellularLocation>
        <location evidence="3">Cell junction</location>
        <location evidence="3">Focal adhesion</location>
    </subcellularLocation>
    <subcellularLocation>
        <location evidence="3">Secreted</location>
        <location evidence="3">Extracellular space</location>
        <location evidence="3">Extracellular matrix</location>
    </subcellularLocation>
    <subcellularLocation>
        <location evidence="3">Microsome membrane</location>
    </subcellularLocation>
    <subcellularLocation>
        <location evidence="3">Secreted</location>
    </subcellularLocation>
    <subcellularLocation>
        <location evidence="1">Synapse</location>
        <location evidence="1">Synaptosome</location>
    </subcellularLocation>
    <text evidence="3">Proteolytic cleavage gives rise to a shedded ectodomain.</text>
</comment>
<comment type="tissue specificity">
    <text evidence="7">Expressed in pancreas, skeletal muscle, brain, and heart.</text>
</comment>
<comment type="PTM">
    <text evidence="7 10">N-glycosylated.</text>
</comment>
<comment type="PTM">
    <text evidence="3">Proteolytic cleavage in the juxtamembrane region gives rise to a soluble ectodomain. Cleavage is probably effected by a metalloprotease.</text>
</comment>
<comment type="sequence caution" evidence="11">
    <conflict type="erroneous initiation">
        <sequence resource="EMBL-CDS" id="BAA23701"/>
    </conflict>
</comment>
<protein>
    <recommendedName>
        <fullName>Leucine-rich repeat transmembrane protein FLRT2</fullName>
    </recommendedName>
    <alternativeName>
        <fullName>Fibronectin-like domain-containing leucine-rich transmembrane protein 2</fullName>
    </alternativeName>
</protein>
<keyword id="KW-0130">Cell adhesion</keyword>
<keyword id="KW-0965">Cell junction</keyword>
<keyword id="KW-1003">Cell membrane</keyword>
<keyword id="KW-0217">Developmental protein</keyword>
<keyword id="KW-0903">Direct protein sequencing</keyword>
<keyword id="KW-1015">Disulfide bond</keyword>
<keyword id="KW-0256">Endoplasmic reticulum</keyword>
<keyword id="KW-0272">Extracellular matrix</keyword>
<keyword id="KW-0325">Glycoprotein</keyword>
<keyword id="KW-0433">Leucine-rich repeat</keyword>
<keyword id="KW-0472">Membrane</keyword>
<keyword id="KW-0492">Microsome</keyword>
<keyword id="KW-1267">Proteomics identification</keyword>
<keyword id="KW-1185">Reference proteome</keyword>
<keyword id="KW-0677">Repeat</keyword>
<keyword id="KW-0964">Secreted</keyword>
<keyword id="KW-0732">Signal</keyword>
<keyword id="KW-0770">Synapse</keyword>
<keyword id="KW-0771">Synaptosome</keyword>
<keyword id="KW-0812">Transmembrane</keyword>
<keyword id="KW-1133">Transmembrane helix</keyword>
<accession>O43155</accession>
<accession>A0AV84</accession>
<accession>B7ZLP3</accession>
<reference key="1">
    <citation type="journal article" date="1999" name="Genomics">
        <title>Identification of FLRT1, FLRT2, and FLRT3: a novel family of transmembrane leucine-rich repeat proteins.</title>
        <authorList>
            <person name="Lacy S.E."/>
            <person name="Bonnemann C.G."/>
            <person name="Buzney E.A."/>
            <person name="Kunkel L.M."/>
        </authorList>
    </citation>
    <scope>NUCLEOTIDE SEQUENCE [MRNA]</scope>
    <scope>TISSUE SPECIFICITY</scope>
    <scope>GLYCOSYLATION</scope>
</reference>
<reference key="2">
    <citation type="journal article" date="1997" name="DNA Res.">
        <title>Prediction of the coding sequences of unidentified human genes. VIII. 78 new cDNA clones from brain which code for large proteins in vitro.</title>
        <authorList>
            <person name="Ishikawa K."/>
            <person name="Nagase T."/>
            <person name="Nakajima D."/>
            <person name="Seki N."/>
            <person name="Ohira M."/>
            <person name="Miyajima N."/>
            <person name="Tanaka A."/>
            <person name="Kotani H."/>
            <person name="Nomura N."/>
            <person name="Ohara O."/>
        </authorList>
    </citation>
    <scope>NUCLEOTIDE SEQUENCE [LARGE SCALE MRNA]</scope>
    <source>
        <tissue>Brain</tissue>
    </source>
</reference>
<reference key="3">
    <citation type="journal article" date="2003" name="Genome Res.">
        <title>The secreted protein discovery initiative (SPDI), a large-scale effort to identify novel human secreted and transmembrane proteins: a bioinformatics assessment.</title>
        <authorList>
            <person name="Clark H.F."/>
            <person name="Gurney A.L."/>
            <person name="Abaya E."/>
            <person name="Baker K."/>
            <person name="Baldwin D.T."/>
            <person name="Brush J."/>
            <person name="Chen J."/>
            <person name="Chow B."/>
            <person name="Chui C."/>
            <person name="Crowley C."/>
            <person name="Currell B."/>
            <person name="Deuel B."/>
            <person name="Dowd P."/>
            <person name="Eaton D."/>
            <person name="Foster J.S."/>
            <person name="Grimaldi C."/>
            <person name="Gu Q."/>
            <person name="Hass P.E."/>
            <person name="Heldens S."/>
            <person name="Huang A."/>
            <person name="Kim H.S."/>
            <person name="Klimowski L."/>
            <person name="Jin Y."/>
            <person name="Johnson S."/>
            <person name="Lee J."/>
            <person name="Lewis L."/>
            <person name="Liao D."/>
            <person name="Mark M.R."/>
            <person name="Robbie E."/>
            <person name="Sanchez C."/>
            <person name="Schoenfeld J."/>
            <person name="Seshagiri S."/>
            <person name="Simmons L."/>
            <person name="Singh J."/>
            <person name="Smith V."/>
            <person name="Stinson J."/>
            <person name="Vagts A."/>
            <person name="Vandlen R.L."/>
            <person name="Watanabe C."/>
            <person name="Wieand D."/>
            <person name="Woods K."/>
            <person name="Xie M.-H."/>
            <person name="Yansura D.G."/>
            <person name="Yi S."/>
            <person name="Yu G."/>
            <person name="Yuan J."/>
            <person name="Zhang M."/>
            <person name="Zhang Z."/>
            <person name="Goddard A.D."/>
            <person name="Wood W.I."/>
            <person name="Godowski P.J."/>
            <person name="Gray A.M."/>
        </authorList>
    </citation>
    <scope>NUCLEOTIDE SEQUENCE [LARGE SCALE MRNA]</scope>
</reference>
<reference key="4">
    <citation type="journal article" date="2004" name="Genome Res.">
        <title>The status, quality, and expansion of the NIH full-length cDNA project: the Mammalian Gene Collection (MGC).</title>
        <authorList>
            <consortium name="The MGC Project Team"/>
        </authorList>
    </citation>
    <scope>NUCLEOTIDE SEQUENCE [LARGE SCALE MRNA]</scope>
    <scope>VARIANT GLN-486</scope>
    <source>
        <tissue>Brain</tissue>
        <tissue>Cerebellum</tissue>
    </source>
</reference>
<reference key="5">
    <citation type="journal article" date="2004" name="Protein Sci.">
        <title>Signal peptide prediction based on analysis of experimentally verified cleavage sites.</title>
        <authorList>
            <person name="Zhang Z."/>
            <person name="Henzel W.J."/>
        </authorList>
    </citation>
    <scope>PROTEIN SEQUENCE OF 36-50</scope>
</reference>
<reference key="6">
    <citation type="journal article" date="2009" name="J. Proteome Res.">
        <title>Glycoproteomics analysis of human liver tissue by combination of multiple enzyme digestion and hydrazide chemistry.</title>
        <authorList>
            <person name="Chen R."/>
            <person name="Jiang X."/>
            <person name="Sun D."/>
            <person name="Han G."/>
            <person name="Wang F."/>
            <person name="Ye M."/>
            <person name="Wang L."/>
            <person name="Zou H."/>
        </authorList>
    </citation>
    <scope>GLYCOSYLATION [LARGE SCALE ANALYSIS] AT ASN-202</scope>
    <source>
        <tissue>Liver</tissue>
    </source>
</reference>
<sequence>MGLQTTKWPSHGAFFLKSWLIISLGLYSQVSKLLACPSVCRCDRNFVYCNERSLTSVPLGIPEGVTVLYLHNNQINNAGFPAELHNVQSVHTVYLYGNQLDEFPMNLPKNVRVLHLQENNIQTISRAALAQLLKLEELHLDDNSISTVGVEDGAFREAISLKLLFLSKNHLSSVPVGLPVDLQELRVDENRIAVISDMAFQNLTSLERLIVDGNLLTNKGIAEGTFSHLTKLKEFSIVRNSLSHPPPDLPGTHLIRLYLQDNQINHIPLTAFSNLRKLERLDISNNQLRMLTQGVFDNLSNLKQLTARNNPWFCDCSIKWVTEWLKYIPSSLNVRGFMCQGPEQVRGMAVRELNMNLLSCPTTTPGLPLFTPAPSTASPTTQPPTLSIPNPSRSYTPPTPTTSKLPTIPDWDGRERVTPPISERIQLSIHFVNDTSIQVSWLSLFTVMAYKLTWVKMGHSLVGGIVQERIVSGEKQHLSLVNLEPRSTYRICLVPLDAFNYRAVEDTICSEATTHASYLNNGSNTASSHEQTTSHSMGSPFLLAGLIGGAVIFVLVVLLSVFCWHMHKKGRYTSQKWKYNRGRRKDDYCEAGTKKDNSILEMTETSFQIVSLNNDQLLKGDFRLQPIYTPNGGINYTDCHIPNNMRYCNSSVPDLEHCHT</sequence>
<feature type="signal peptide" evidence="8">
    <location>
        <begin position="1"/>
        <end position="35"/>
    </location>
</feature>
<feature type="chain" id="PRO_0000021279" description="Leucine-rich repeat transmembrane protein FLRT2">
    <location>
        <begin position="36"/>
        <end position="660"/>
    </location>
</feature>
<feature type="topological domain" description="Extracellular" evidence="4">
    <location>
        <begin position="36"/>
        <end position="541"/>
    </location>
</feature>
<feature type="transmembrane region" description="Helical" evidence="4">
    <location>
        <begin position="542"/>
        <end position="562"/>
    </location>
</feature>
<feature type="topological domain" description="Cytoplasmic" evidence="4">
    <location>
        <begin position="563"/>
        <end position="660"/>
    </location>
</feature>
<feature type="domain" description="LRRNT">
    <location>
        <begin position="36"/>
        <end position="63"/>
    </location>
</feature>
<feature type="repeat" description="LRR 1">
    <location>
        <begin position="64"/>
        <end position="85"/>
    </location>
</feature>
<feature type="repeat" description="LRR 2">
    <location>
        <begin position="89"/>
        <end position="109"/>
    </location>
</feature>
<feature type="repeat" description="LRR 3">
    <location>
        <begin position="110"/>
        <end position="131"/>
    </location>
</feature>
<feature type="repeat" description="LRR 4">
    <location>
        <begin position="134"/>
        <end position="155"/>
    </location>
</feature>
<feature type="repeat" description="LRR 5">
    <location>
        <begin position="160"/>
        <end position="181"/>
    </location>
</feature>
<feature type="repeat" description="LRR 6">
    <location>
        <begin position="182"/>
        <end position="202"/>
    </location>
</feature>
<feature type="repeat" description="LRR 7">
    <location>
        <begin position="205"/>
        <end position="225"/>
    </location>
</feature>
<feature type="repeat" description="LRR 8">
    <location>
        <begin position="231"/>
        <end position="252"/>
    </location>
</feature>
<feature type="repeat" description="LRR 9">
    <location>
        <begin position="253"/>
        <end position="274"/>
    </location>
</feature>
<feature type="repeat" description="LRR 10">
    <location>
        <begin position="277"/>
        <end position="298"/>
    </location>
</feature>
<feature type="domain" description="LRRCT">
    <location>
        <begin position="310"/>
        <end position="362"/>
    </location>
</feature>
<feature type="domain" description="Fibronectin type-III" evidence="5">
    <location>
        <begin position="419"/>
        <end position="517"/>
    </location>
</feature>
<feature type="region of interest" description="Disordered" evidence="6">
    <location>
        <begin position="373"/>
        <end position="413"/>
    </location>
</feature>
<feature type="compositionally biased region" description="Low complexity" evidence="6">
    <location>
        <begin position="373"/>
        <end position="409"/>
    </location>
</feature>
<feature type="glycosylation site" description="N-linked (GlcNAc...) asparagine" evidence="10">
    <location>
        <position position="202"/>
    </location>
</feature>
<feature type="glycosylation site" description="N-linked (GlcNAc...) asparagine" evidence="4">
    <location>
        <position position="298"/>
    </location>
</feature>
<feature type="glycosylation site" description="N-linked (GlcNAc...) asparagine" evidence="4">
    <location>
        <position position="433"/>
    </location>
</feature>
<feature type="glycosylation site" description="N-linked (GlcNAc...) asparagine" evidence="4">
    <location>
        <position position="521"/>
    </location>
</feature>
<feature type="disulfide bond" evidence="2">
    <location>
        <begin position="36"/>
        <end position="42"/>
    </location>
</feature>
<feature type="disulfide bond" evidence="2">
    <location>
        <begin position="40"/>
        <end position="49"/>
    </location>
</feature>
<feature type="disulfide bond" evidence="2">
    <location>
        <begin position="314"/>
        <end position="339"/>
    </location>
</feature>
<feature type="disulfide bond" evidence="3">
    <location>
        <begin position="316"/>
        <end position="360"/>
    </location>
</feature>
<feature type="sequence variant" id="VAR_050996" description="In dbSNP:rs17646457." evidence="9">
    <original>R</original>
    <variation>Q</variation>
    <location>
        <position position="486"/>
    </location>
</feature>
<organism>
    <name type="scientific">Homo sapiens</name>
    <name type="common">Human</name>
    <dbReference type="NCBI Taxonomy" id="9606"/>
    <lineage>
        <taxon>Eukaryota</taxon>
        <taxon>Metazoa</taxon>
        <taxon>Chordata</taxon>
        <taxon>Craniata</taxon>
        <taxon>Vertebrata</taxon>
        <taxon>Euteleostomi</taxon>
        <taxon>Mammalia</taxon>
        <taxon>Eutheria</taxon>
        <taxon>Euarchontoglires</taxon>
        <taxon>Primates</taxon>
        <taxon>Haplorrhini</taxon>
        <taxon>Catarrhini</taxon>
        <taxon>Hominidae</taxon>
        <taxon>Homo</taxon>
    </lineage>
</organism>
<name>FLRT2_HUMAN</name>
<gene>
    <name type="primary">FLRT2</name>
    <name type="synonym">KIAA0405</name>
    <name type="ORF">UNQ232/PRO265</name>
</gene>
<evidence type="ECO:0000250" key="1">
    <source>
        <dbReference type="UniProtKB" id="D3ZTV3"/>
    </source>
</evidence>
<evidence type="ECO:0000250" key="2">
    <source>
        <dbReference type="UniProtKB" id="Q8BGT1"/>
    </source>
</evidence>
<evidence type="ECO:0000250" key="3">
    <source>
        <dbReference type="UniProtKB" id="Q8BLU0"/>
    </source>
</evidence>
<evidence type="ECO:0000255" key="4"/>
<evidence type="ECO:0000255" key="5">
    <source>
        <dbReference type="PROSITE-ProRule" id="PRU00316"/>
    </source>
</evidence>
<evidence type="ECO:0000256" key="6">
    <source>
        <dbReference type="SAM" id="MobiDB-lite"/>
    </source>
</evidence>
<evidence type="ECO:0000269" key="7">
    <source>
    </source>
</evidence>
<evidence type="ECO:0000269" key="8">
    <source>
    </source>
</evidence>
<evidence type="ECO:0000269" key="9">
    <source>
    </source>
</evidence>
<evidence type="ECO:0000269" key="10">
    <source>
    </source>
</evidence>
<evidence type="ECO:0000305" key="11"/>
<proteinExistence type="evidence at protein level"/>